<feature type="chain" id="PRO_0000050280" description="Uncharacterized HTH-type transcriptional regulator YulB">
    <location>
        <begin position="1"/>
        <end position="258"/>
    </location>
</feature>
<feature type="domain" description="HTH deoR-type" evidence="1">
    <location>
        <begin position="3"/>
        <end position="58"/>
    </location>
</feature>
<feature type="DNA-binding region" description="H-T-H motif" evidence="1">
    <location>
        <begin position="20"/>
        <end position="39"/>
    </location>
</feature>
<reference key="1">
    <citation type="journal article" date="1997" name="Microbiology">
        <title>Analysis of the Bacillus subtilis genome: cloning and nucleotide sequence of a 62 kb region between 275 degrees (rrnB) and 284 degrees (pai).</title>
        <authorList>
            <person name="Oudega B."/>
            <person name="Koningstein G."/>
            <person name="Rodrigues L."/>
            <person name="de Sales Ramon M."/>
            <person name="Hilbert H."/>
            <person name="Duesterhoeft A."/>
            <person name="Pohl T.M."/>
            <person name="Weitzenegger T."/>
        </authorList>
    </citation>
    <scope>NUCLEOTIDE SEQUENCE [GENOMIC DNA]</scope>
    <source>
        <strain>168</strain>
    </source>
</reference>
<reference key="2">
    <citation type="journal article" date="1997" name="Nature">
        <title>The complete genome sequence of the Gram-positive bacterium Bacillus subtilis.</title>
        <authorList>
            <person name="Kunst F."/>
            <person name="Ogasawara N."/>
            <person name="Moszer I."/>
            <person name="Albertini A.M."/>
            <person name="Alloni G."/>
            <person name="Azevedo V."/>
            <person name="Bertero M.G."/>
            <person name="Bessieres P."/>
            <person name="Bolotin A."/>
            <person name="Borchert S."/>
            <person name="Borriss R."/>
            <person name="Boursier L."/>
            <person name="Brans A."/>
            <person name="Braun M."/>
            <person name="Brignell S.C."/>
            <person name="Bron S."/>
            <person name="Brouillet S."/>
            <person name="Bruschi C.V."/>
            <person name="Caldwell B."/>
            <person name="Capuano V."/>
            <person name="Carter N.M."/>
            <person name="Choi S.-K."/>
            <person name="Codani J.-J."/>
            <person name="Connerton I.F."/>
            <person name="Cummings N.J."/>
            <person name="Daniel R.A."/>
            <person name="Denizot F."/>
            <person name="Devine K.M."/>
            <person name="Duesterhoeft A."/>
            <person name="Ehrlich S.D."/>
            <person name="Emmerson P.T."/>
            <person name="Entian K.-D."/>
            <person name="Errington J."/>
            <person name="Fabret C."/>
            <person name="Ferrari E."/>
            <person name="Foulger D."/>
            <person name="Fritz C."/>
            <person name="Fujita M."/>
            <person name="Fujita Y."/>
            <person name="Fuma S."/>
            <person name="Galizzi A."/>
            <person name="Galleron N."/>
            <person name="Ghim S.-Y."/>
            <person name="Glaser P."/>
            <person name="Goffeau A."/>
            <person name="Golightly E.J."/>
            <person name="Grandi G."/>
            <person name="Guiseppi G."/>
            <person name="Guy B.J."/>
            <person name="Haga K."/>
            <person name="Haiech J."/>
            <person name="Harwood C.R."/>
            <person name="Henaut A."/>
            <person name="Hilbert H."/>
            <person name="Holsappel S."/>
            <person name="Hosono S."/>
            <person name="Hullo M.-F."/>
            <person name="Itaya M."/>
            <person name="Jones L.-M."/>
            <person name="Joris B."/>
            <person name="Karamata D."/>
            <person name="Kasahara Y."/>
            <person name="Klaerr-Blanchard M."/>
            <person name="Klein C."/>
            <person name="Kobayashi Y."/>
            <person name="Koetter P."/>
            <person name="Koningstein G."/>
            <person name="Krogh S."/>
            <person name="Kumano M."/>
            <person name="Kurita K."/>
            <person name="Lapidus A."/>
            <person name="Lardinois S."/>
            <person name="Lauber J."/>
            <person name="Lazarevic V."/>
            <person name="Lee S.-M."/>
            <person name="Levine A."/>
            <person name="Liu H."/>
            <person name="Masuda S."/>
            <person name="Mauel C."/>
            <person name="Medigue C."/>
            <person name="Medina N."/>
            <person name="Mellado R.P."/>
            <person name="Mizuno M."/>
            <person name="Moestl D."/>
            <person name="Nakai S."/>
            <person name="Noback M."/>
            <person name="Noone D."/>
            <person name="O'Reilly M."/>
            <person name="Ogawa K."/>
            <person name="Ogiwara A."/>
            <person name="Oudega B."/>
            <person name="Park S.-H."/>
            <person name="Parro V."/>
            <person name="Pohl T.M."/>
            <person name="Portetelle D."/>
            <person name="Porwollik S."/>
            <person name="Prescott A.M."/>
            <person name="Presecan E."/>
            <person name="Pujic P."/>
            <person name="Purnelle B."/>
            <person name="Rapoport G."/>
            <person name="Rey M."/>
            <person name="Reynolds S."/>
            <person name="Rieger M."/>
            <person name="Rivolta C."/>
            <person name="Rocha E."/>
            <person name="Roche B."/>
            <person name="Rose M."/>
            <person name="Sadaie Y."/>
            <person name="Sato T."/>
            <person name="Scanlan E."/>
            <person name="Schleich S."/>
            <person name="Schroeter R."/>
            <person name="Scoffone F."/>
            <person name="Sekiguchi J."/>
            <person name="Sekowska A."/>
            <person name="Seror S.J."/>
            <person name="Serror P."/>
            <person name="Shin B.-S."/>
            <person name="Soldo B."/>
            <person name="Sorokin A."/>
            <person name="Tacconi E."/>
            <person name="Takagi T."/>
            <person name="Takahashi H."/>
            <person name="Takemaru K."/>
            <person name="Takeuchi M."/>
            <person name="Tamakoshi A."/>
            <person name="Tanaka T."/>
            <person name="Terpstra P."/>
            <person name="Tognoni A."/>
            <person name="Tosato V."/>
            <person name="Uchiyama S."/>
            <person name="Vandenbol M."/>
            <person name="Vannier F."/>
            <person name="Vassarotti A."/>
            <person name="Viari A."/>
            <person name="Wambutt R."/>
            <person name="Wedler E."/>
            <person name="Wedler H."/>
            <person name="Weitzenegger T."/>
            <person name="Winters P."/>
            <person name="Wipat A."/>
            <person name="Yamamoto H."/>
            <person name="Yamane K."/>
            <person name="Yasumoto K."/>
            <person name="Yata K."/>
            <person name="Yoshida K."/>
            <person name="Yoshikawa H.-F."/>
            <person name="Zumstein E."/>
            <person name="Yoshikawa H."/>
            <person name="Danchin A."/>
        </authorList>
    </citation>
    <scope>NUCLEOTIDE SEQUENCE [LARGE SCALE GENOMIC DNA]</scope>
    <source>
        <strain>168</strain>
    </source>
</reference>
<name>YULB_BACSU</name>
<keyword id="KW-0238">DNA-binding</keyword>
<keyword id="KW-1185">Reference proteome</keyword>
<keyword id="KW-0678">Repressor</keyword>
<keyword id="KW-0804">Transcription</keyword>
<keyword id="KW-0805">Transcription regulation</keyword>
<evidence type="ECO:0000255" key="1">
    <source>
        <dbReference type="PROSITE-ProRule" id="PRU00349"/>
    </source>
</evidence>
<accession>O05261</accession>
<protein>
    <recommendedName>
        <fullName>Uncharacterized HTH-type transcriptional regulator YulB</fullName>
    </recommendedName>
</protein>
<proteinExistence type="predicted"/>
<organism>
    <name type="scientific">Bacillus subtilis (strain 168)</name>
    <dbReference type="NCBI Taxonomy" id="224308"/>
    <lineage>
        <taxon>Bacteria</taxon>
        <taxon>Bacillati</taxon>
        <taxon>Bacillota</taxon>
        <taxon>Bacilli</taxon>
        <taxon>Bacillales</taxon>
        <taxon>Bacillaceae</taxon>
        <taxon>Bacillus</taxon>
    </lineage>
</organism>
<gene>
    <name type="primary">yulB</name>
    <name type="ordered locus">BSU31210</name>
</gene>
<dbReference type="EMBL" id="Z93938">
    <property type="protein sequence ID" value="CAB07948.1"/>
    <property type="molecule type" value="Genomic_DNA"/>
</dbReference>
<dbReference type="EMBL" id="AL009126">
    <property type="protein sequence ID" value="CAB15099.1"/>
    <property type="molecule type" value="Genomic_DNA"/>
</dbReference>
<dbReference type="PIR" id="D70014">
    <property type="entry name" value="D70014"/>
</dbReference>
<dbReference type="SMR" id="O05261"/>
<dbReference type="FunCoup" id="O05261">
    <property type="interactions" value="84"/>
</dbReference>
<dbReference type="STRING" id="224308.BSU31210"/>
<dbReference type="PaxDb" id="224308-BSU31210"/>
<dbReference type="EnsemblBacteria" id="CAB15099">
    <property type="protein sequence ID" value="CAB15099"/>
    <property type="gene ID" value="BSU_31210"/>
</dbReference>
<dbReference type="GeneID" id="938838"/>
<dbReference type="KEGG" id="bsu:BSU31210"/>
<dbReference type="PATRIC" id="fig|224308.179.peg.3381"/>
<dbReference type="eggNOG" id="COG1349">
    <property type="taxonomic scope" value="Bacteria"/>
</dbReference>
<dbReference type="InParanoid" id="O05261"/>
<dbReference type="OrthoDB" id="9797223at2"/>
<dbReference type="PhylomeDB" id="O05261"/>
<dbReference type="BioCyc" id="BSUB:BSU31210-MONOMER"/>
<dbReference type="Proteomes" id="UP000001570">
    <property type="component" value="Chromosome"/>
</dbReference>
<dbReference type="GO" id="GO:0000987">
    <property type="term" value="F:cis-regulatory region sequence-specific DNA binding"/>
    <property type="evidence" value="ECO:0000318"/>
    <property type="project" value="GO_Central"/>
</dbReference>
<dbReference type="GO" id="GO:0098531">
    <property type="term" value="F:ligand-modulated transcription factor activity"/>
    <property type="evidence" value="ECO:0000318"/>
    <property type="project" value="GO_Central"/>
</dbReference>
<dbReference type="GO" id="GO:0006355">
    <property type="term" value="P:regulation of DNA-templated transcription"/>
    <property type="evidence" value="ECO:0000318"/>
    <property type="project" value="GO_Central"/>
</dbReference>
<dbReference type="Gene3D" id="3.40.50.1360">
    <property type="match status" value="1"/>
</dbReference>
<dbReference type="Gene3D" id="1.10.10.10">
    <property type="entry name" value="Winged helix-like DNA-binding domain superfamily/Winged helix DNA-binding domain"/>
    <property type="match status" value="1"/>
</dbReference>
<dbReference type="InterPro" id="IPR050313">
    <property type="entry name" value="Carb_Metab_HTH_regulators"/>
</dbReference>
<dbReference type="InterPro" id="IPR014036">
    <property type="entry name" value="DeoR-like_C"/>
</dbReference>
<dbReference type="InterPro" id="IPR001034">
    <property type="entry name" value="DeoR_HTH"/>
</dbReference>
<dbReference type="InterPro" id="IPR037171">
    <property type="entry name" value="NagB/RpiA_transferase-like"/>
</dbReference>
<dbReference type="InterPro" id="IPR018356">
    <property type="entry name" value="Tscrpt_reg_HTH_DeoR_CS"/>
</dbReference>
<dbReference type="InterPro" id="IPR036388">
    <property type="entry name" value="WH-like_DNA-bd_sf"/>
</dbReference>
<dbReference type="InterPro" id="IPR036390">
    <property type="entry name" value="WH_DNA-bd_sf"/>
</dbReference>
<dbReference type="PANTHER" id="PTHR30363:SF44">
    <property type="entry name" value="AGA OPERON TRANSCRIPTIONAL REPRESSOR-RELATED"/>
    <property type="match status" value="1"/>
</dbReference>
<dbReference type="PANTHER" id="PTHR30363">
    <property type="entry name" value="HTH-TYPE TRANSCRIPTIONAL REGULATOR SRLR-RELATED"/>
    <property type="match status" value="1"/>
</dbReference>
<dbReference type="Pfam" id="PF00455">
    <property type="entry name" value="DeoRC"/>
    <property type="match status" value="1"/>
</dbReference>
<dbReference type="Pfam" id="PF08220">
    <property type="entry name" value="HTH_DeoR"/>
    <property type="match status" value="1"/>
</dbReference>
<dbReference type="PRINTS" id="PR00037">
    <property type="entry name" value="HTHLACR"/>
</dbReference>
<dbReference type="SMART" id="SM01134">
    <property type="entry name" value="DeoRC"/>
    <property type="match status" value="1"/>
</dbReference>
<dbReference type="SMART" id="SM00420">
    <property type="entry name" value="HTH_DEOR"/>
    <property type="match status" value="1"/>
</dbReference>
<dbReference type="SUPFAM" id="SSF100950">
    <property type="entry name" value="NagB/RpiA/CoA transferase-like"/>
    <property type="match status" value="1"/>
</dbReference>
<dbReference type="SUPFAM" id="SSF46785">
    <property type="entry name" value="Winged helix' DNA-binding domain"/>
    <property type="match status" value="1"/>
</dbReference>
<dbReference type="PROSITE" id="PS00894">
    <property type="entry name" value="HTH_DEOR_1"/>
    <property type="match status" value="1"/>
</dbReference>
<dbReference type="PROSITE" id="PS51000">
    <property type="entry name" value="HTH_DEOR_2"/>
    <property type="match status" value="1"/>
</dbReference>
<sequence length="258" mass="28855">MLVAERQQKIVEIVNMRSSIRVSELSDIFSVTEETIRRDLEKLEKEHKLSRSHGGAVSIQQKESEIHFSEREITNVIEKKAIAHEAAKYVKSGDRIILDASTTAWYMAKILPDIELTVITNSMKAAIELSNKENISVISTGGILLEKSLSFAGPLAERSLETYHVNKTFLSCKGFDVHNGMSDSNEWQALLKKRMIERSDQTILMADSSKWGNREFSHIASLQDVSRLITDSGLDPASVKALEDKKVKVTAVPLSKRG</sequence>